<proteinExistence type="inferred from homology"/>
<dbReference type="EC" id="2.1.3.15" evidence="1"/>
<dbReference type="EMBL" id="AE016877">
    <property type="protein sequence ID" value="AAP11509.1"/>
    <property type="molecule type" value="Genomic_DNA"/>
</dbReference>
<dbReference type="RefSeq" id="NP_834308.1">
    <property type="nucleotide sequence ID" value="NC_004722.1"/>
</dbReference>
<dbReference type="RefSeq" id="WP_000942856.1">
    <property type="nucleotide sequence ID" value="NZ_CP138336.1"/>
</dbReference>
<dbReference type="SMR" id="Q817F1"/>
<dbReference type="STRING" id="226900.BC_4602"/>
<dbReference type="KEGG" id="bce:BC4602"/>
<dbReference type="PATRIC" id="fig|226900.8.peg.4763"/>
<dbReference type="HOGENOM" id="CLU_015486_1_1_9"/>
<dbReference type="OrthoDB" id="9772975at2"/>
<dbReference type="UniPathway" id="UPA00655">
    <property type="reaction ID" value="UER00711"/>
</dbReference>
<dbReference type="Proteomes" id="UP000001417">
    <property type="component" value="Chromosome"/>
</dbReference>
<dbReference type="GO" id="GO:0009317">
    <property type="term" value="C:acetyl-CoA carboxylase complex"/>
    <property type="evidence" value="ECO:0007669"/>
    <property type="project" value="InterPro"/>
</dbReference>
<dbReference type="GO" id="GO:0003989">
    <property type="term" value="F:acetyl-CoA carboxylase activity"/>
    <property type="evidence" value="ECO:0007669"/>
    <property type="project" value="InterPro"/>
</dbReference>
<dbReference type="GO" id="GO:0005524">
    <property type="term" value="F:ATP binding"/>
    <property type="evidence" value="ECO:0007669"/>
    <property type="project" value="UniProtKB-KW"/>
</dbReference>
<dbReference type="GO" id="GO:0016743">
    <property type="term" value="F:carboxyl- or carbamoyltransferase activity"/>
    <property type="evidence" value="ECO:0007669"/>
    <property type="project" value="UniProtKB-UniRule"/>
</dbReference>
<dbReference type="GO" id="GO:0008270">
    <property type="term" value="F:zinc ion binding"/>
    <property type="evidence" value="ECO:0007669"/>
    <property type="project" value="UniProtKB-UniRule"/>
</dbReference>
<dbReference type="GO" id="GO:2001295">
    <property type="term" value="P:malonyl-CoA biosynthetic process"/>
    <property type="evidence" value="ECO:0007669"/>
    <property type="project" value="UniProtKB-UniRule"/>
</dbReference>
<dbReference type="GO" id="GO:0071768">
    <property type="term" value="P:mycolic acid biosynthetic process"/>
    <property type="evidence" value="ECO:0000318"/>
    <property type="project" value="GO_Central"/>
</dbReference>
<dbReference type="Gene3D" id="3.90.226.10">
    <property type="entry name" value="2-enoyl-CoA Hydratase, Chain A, domain 1"/>
    <property type="match status" value="1"/>
</dbReference>
<dbReference type="HAMAP" id="MF_01395">
    <property type="entry name" value="AcetylCoA_CT_beta"/>
    <property type="match status" value="1"/>
</dbReference>
<dbReference type="InterPro" id="IPR034733">
    <property type="entry name" value="AcCoA_carboxyl_beta"/>
</dbReference>
<dbReference type="InterPro" id="IPR000438">
    <property type="entry name" value="Acetyl_CoA_COase_Trfase_b_su"/>
</dbReference>
<dbReference type="InterPro" id="IPR029045">
    <property type="entry name" value="ClpP/crotonase-like_dom_sf"/>
</dbReference>
<dbReference type="InterPro" id="IPR011762">
    <property type="entry name" value="COA_CT_N"/>
</dbReference>
<dbReference type="InterPro" id="IPR041010">
    <property type="entry name" value="Znf-ACC"/>
</dbReference>
<dbReference type="NCBIfam" id="TIGR00515">
    <property type="entry name" value="accD"/>
    <property type="match status" value="1"/>
</dbReference>
<dbReference type="PANTHER" id="PTHR42995">
    <property type="entry name" value="ACETYL-COENZYME A CARBOXYLASE CARBOXYL TRANSFERASE SUBUNIT BETA, CHLOROPLASTIC"/>
    <property type="match status" value="1"/>
</dbReference>
<dbReference type="PANTHER" id="PTHR42995:SF5">
    <property type="entry name" value="ACETYL-COENZYME A CARBOXYLASE CARBOXYL TRANSFERASE SUBUNIT BETA, CHLOROPLASTIC"/>
    <property type="match status" value="1"/>
</dbReference>
<dbReference type="Pfam" id="PF01039">
    <property type="entry name" value="Carboxyl_trans"/>
    <property type="match status" value="1"/>
</dbReference>
<dbReference type="Pfam" id="PF17848">
    <property type="entry name" value="Zn_ribbon_ACC"/>
    <property type="match status" value="1"/>
</dbReference>
<dbReference type="PRINTS" id="PR01070">
    <property type="entry name" value="ACCCTRFRASEB"/>
</dbReference>
<dbReference type="SUPFAM" id="SSF52096">
    <property type="entry name" value="ClpP/crotonase"/>
    <property type="match status" value="1"/>
</dbReference>
<dbReference type="PROSITE" id="PS50980">
    <property type="entry name" value="COA_CT_NTER"/>
    <property type="match status" value="1"/>
</dbReference>
<comment type="function">
    <text evidence="1">Component of the acetyl coenzyme A carboxylase (ACC) complex. Biotin carboxylase (BC) catalyzes the carboxylation of biotin on its carrier protein (BCCP) and then the CO(2) group is transferred by the transcarboxylase to acetyl-CoA to form malonyl-CoA.</text>
</comment>
<comment type="catalytic activity">
    <reaction evidence="1">
        <text>N(6)-carboxybiotinyl-L-lysyl-[protein] + acetyl-CoA = N(6)-biotinyl-L-lysyl-[protein] + malonyl-CoA</text>
        <dbReference type="Rhea" id="RHEA:54728"/>
        <dbReference type="Rhea" id="RHEA-COMP:10505"/>
        <dbReference type="Rhea" id="RHEA-COMP:10506"/>
        <dbReference type="ChEBI" id="CHEBI:57288"/>
        <dbReference type="ChEBI" id="CHEBI:57384"/>
        <dbReference type="ChEBI" id="CHEBI:83144"/>
        <dbReference type="ChEBI" id="CHEBI:83145"/>
        <dbReference type="EC" id="2.1.3.15"/>
    </reaction>
</comment>
<comment type="cofactor">
    <cofactor evidence="1">
        <name>Zn(2+)</name>
        <dbReference type="ChEBI" id="CHEBI:29105"/>
    </cofactor>
    <text evidence="1">Binds 1 zinc ion per subunit.</text>
</comment>
<comment type="pathway">
    <text evidence="1">Lipid metabolism; malonyl-CoA biosynthesis; malonyl-CoA from acetyl-CoA: step 1/1.</text>
</comment>
<comment type="subunit">
    <text evidence="1">Acetyl-CoA carboxylase is a heterohexamer composed of biotin carboxyl carrier protein (AccB), biotin carboxylase (AccC) and two subunits each of ACCase subunit alpha (AccA) and ACCase subunit beta (AccD).</text>
</comment>
<comment type="subcellular location">
    <subcellularLocation>
        <location evidence="1">Cytoplasm</location>
    </subcellularLocation>
</comment>
<comment type="similarity">
    <text evidence="1">Belongs to the AccD/PCCB family.</text>
</comment>
<sequence length="289" mass="32225">MLRDLFVKKKKYAAIPSEQVRKDVPDGVMTKCPECKKIMYTKELLKNLKVCVNCGYHHPMNAWERLDSILDEGSFREYDKEMVSLNPLEFPGYEEKLESDRKKTELNEAVVTGEGTIDDMLVVVAVMDSRFRMGSMGSVVGEKIARAVEKAYDLQVPFIIFTASGGARMQEGILSLMQMAKTSVALKKHSNAGGLFISVMTHPTTGGVSASFASLGDYNLAEPGALIGFAGRRVIEQTVREKLPEDFQTAEFLLDHGQLDAVVHRDDMRESLRKILEVHQGGEMAVWQS</sequence>
<reference key="1">
    <citation type="journal article" date="2003" name="Nature">
        <title>Genome sequence of Bacillus cereus and comparative analysis with Bacillus anthracis.</title>
        <authorList>
            <person name="Ivanova N."/>
            <person name="Sorokin A."/>
            <person name="Anderson I."/>
            <person name="Galleron N."/>
            <person name="Candelon B."/>
            <person name="Kapatral V."/>
            <person name="Bhattacharyya A."/>
            <person name="Reznik G."/>
            <person name="Mikhailova N."/>
            <person name="Lapidus A."/>
            <person name="Chu L."/>
            <person name="Mazur M."/>
            <person name="Goltsman E."/>
            <person name="Larsen N."/>
            <person name="D'Souza M."/>
            <person name="Walunas T."/>
            <person name="Grechkin Y."/>
            <person name="Pusch G."/>
            <person name="Haselkorn R."/>
            <person name="Fonstein M."/>
            <person name="Ehrlich S.D."/>
            <person name="Overbeek R."/>
            <person name="Kyrpides N.C."/>
        </authorList>
    </citation>
    <scope>NUCLEOTIDE SEQUENCE [LARGE SCALE GENOMIC DNA]</scope>
    <source>
        <strain>ATCC 14579 / DSM 31 / CCUG 7414 / JCM 2152 / NBRC 15305 / NCIMB 9373 / NCTC 2599 / NRRL B-3711</strain>
    </source>
</reference>
<feature type="chain" id="PRO_0000389676" description="Acetyl-coenzyme A carboxylase carboxyl transferase subunit beta">
    <location>
        <begin position="1"/>
        <end position="289"/>
    </location>
</feature>
<feature type="domain" description="CoA carboxyltransferase N-terminal" evidence="2">
    <location>
        <begin position="28"/>
        <end position="289"/>
    </location>
</feature>
<feature type="zinc finger region" description="C4-type" evidence="1">
    <location>
        <begin position="32"/>
        <end position="54"/>
    </location>
</feature>
<feature type="binding site" evidence="1">
    <location>
        <position position="32"/>
    </location>
    <ligand>
        <name>Zn(2+)</name>
        <dbReference type="ChEBI" id="CHEBI:29105"/>
    </ligand>
</feature>
<feature type="binding site" evidence="1">
    <location>
        <position position="35"/>
    </location>
    <ligand>
        <name>Zn(2+)</name>
        <dbReference type="ChEBI" id="CHEBI:29105"/>
    </ligand>
</feature>
<feature type="binding site" evidence="1">
    <location>
        <position position="51"/>
    </location>
    <ligand>
        <name>Zn(2+)</name>
        <dbReference type="ChEBI" id="CHEBI:29105"/>
    </ligand>
</feature>
<feature type="binding site" evidence="1">
    <location>
        <position position="54"/>
    </location>
    <ligand>
        <name>Zn(2+)</name>
        <dbReference type="ChEBI" id="CHEBI:29105"/>
    </ligand>
</feature>
<gene>
    <name evidence="1" type="primary">accD</name>
    <name type="ordered locus">BC_4602</name>
</gene>
<name>ACCD_BACCR</name>
<accession>Q817F1</accession>
<keyword id="KW-0067">ATP-binding</keyword>
<keyword id="KW-0963">Cytoplasm</keyword>
<keyword id="KW-0275">Fatty acid biosynthesis</keyword>
<keyword id="KW-0276">Fatty acid metabolism</keyword>
<keyword id="KW-0444">Lipid biosynthesis</keyword>
<keyword id="KW-0443">Lipid metabolism</keyword>
<keyword id="KW-0479">Metal-binding</keyword>
<keyword id="KW-0547">Nucleotide-binding</keyword>
<keyword id="KW-1185">Reference proteome</keyword>
<keyword id="KW-0808">Transferase</keyword>
<keyword id="KW-0862">Zinc</keyword>
<keyword id="KW-0863">Zinc-finger</keyword>
<protein>
    <recommendedName>
        <fullName evidence="1">Acetyl-coenzyme A carboxylase carboxyl transferase subunit beta</fullName>
        <shortName evidence="1">ACCase subunit beta</shortName>
        <shortName evidence="1">Acetyl-CoA carboxylase carboxyltransferase subunit beta</shortName>
        <ecNumber evidence="1">2.1.3.15</ecNumber>
    </recommendedName>
</protein>
<organism>
    <name type="scientific">Bacillus cereus (strain ATCC 14579 / DSM 31 / CCUG 7414 / JCM 2152 / NBRC 15305 / NCIMB 9373 / NCTC 2599 / NRRL B-3711)</name>
    <dbReference type="NCBI Taxonomy" id="226900"/>
    <lineage>
        <taxon>Bacteria</taxon>
        <taxon>Bacillati</taxon>
        <taxon>Bacillota</taxon>
        <taxon>Bacilli</taxon>
        <taxon>Bacillales</taxon>
        <taxon>Bacillaceae</taxon>
        <taxon>Bacillus</taxon>
        <taxon>Bacillus cereus group</taxon>
    </lineage>
</organism>
<evidence type="ECO:0000255" key="1">
    <source>
        <dbReference type="HAMAP-Rule" id="MF_01395"/>
    </source>
</evidence>
<evidence type="ECO:0000255" key="2">
    <source>
        <dbReference type="PROSITE-ProRule" id="PRU01136"/>
    </source>
</evidence>